<name>NEC1_HHV11</name>
<protein>
    <recommendedName>
        <fullName evidence="1">Nuclear egress protein 1</fullName>
    </recommendedName>
</protein>
<sequence length="306" mass="33953">MYDTDPHRRGSRPGPYHGKERRRSRSSAAGGTLGVVRRASRKSLPPHARKQELCLHERQRYRGLFAALAQTPSEEIAIVRSLSVPLVKTTPVSLPFCLDQTVADNCLTLSGMGYYLGIGGCCPACNAGDGRFAATSREALILAFVQQINTIFEHRAFLASLVVLADRHNAPLQDLLAGILGQPELFFVHTILRGGGACDPRLLFYPDPTYGGHMLYVIFPGTSAHLHYRLIDRMLTACPGYRFVAHVWQSTFVLVVRRNAEKPTDAEIPTVSAADIYCKMRDISFDGGLMLEYQRLYATFDEFPPP</sequence>
<dbReference type="EMBL" id="X14112">
    <property type="protein sequence ID" value="CAA32324.1"/>
    <property type="molecule type" value="Genomic_DNA"/>
</dbReference>
<dbReference type="PIR" id="D30085">
    <property type="entry name" value="WMBEH1"/>
</dbReference>
<dbReference type="RefSeq" id="YP_009137106.1">
    <property type="nucleotide sequence ID" value="NC_001806.2"/>
</dbReference>
<dbReference type="PDB" id="4ZXS">
    <property type="method" value="X-ray"/>
    <property type="resolution" value="2.77 A"/>
    <property type="chains" value="B/D=51-306"/>
</dbReference>
<dbReference type="PDB" id="8G6D">
    <property type="method" value="X-ray"/>
    <property type="resolution" value="3.92 A"/>
    <property type="chains" value="B/D/F/H/J/L=51-306"/>
</dbReference>
<dbReference type="PDBsum" id="4ZXS"/>
<dbReference type="PDBsum" id="8G6D"/>
<dbReference type="EMDB" id="EMD-40223"/>
<dbReference type="SMR" id="P10215"/>
<dbReference type="BioGRID" id="971397">
    <property type="interactions" value="1"/>
</dbReference>
<dbReference type="DIP" id="DIP-41285N"/>
<dbReference type="IntAct" id="P10215">
    <property type="interactions" value="3"/>
</dbReference>
<dbReference type="MINT" id="P10215"/>
<dbReference type="DNASU" id="2703350"/>
<dbReference type="GeneID" id="2703350"/>
<dbReference type="KEGG" id="vg:2703350"/>
<dbReference type="EvolutionaryTrace" id="P10215"/>
<dbReference type="Proteomes" id="UP000009294">
    <property type="component" value="Segment"/>
</dbReference>
<dbReference type="GO" id="GO:0044201">
    <property type="term" value="C:host cell nuclear inner membrane"/>
    <property type="evidence" value="ECO:0007669"/>
    <property type="project" value="UniProtKB-SubCell"/>
</dbReference>
<dbReference type="GO" id="GO:0016020">
    <property type="term" value="C:membrane"/>
    <property type="evidence" value="ECO:0007669"/>
    <property type="project" value="UniProtKB-KW"/>
</dbReference>
<dbReference type="GO" id="GO:0008270">
    <property type="term" value="F:zinc ion binding"/>
    <property type="evidence" value="ECO:0007669"/>
    <property type="project" value="UniProtKB-KW"/>
</dbReference>
<dbReference type="GO" id="GO:0046802">
    <property type="term" value="P:exit of virus from host cell nucleus by nuclear egress"/>
    <property type="evidence" value="ECO:0000314"/>
    <property type="project" value="UniProtKB"/>
</dbReference>
<dbReference type="GO" id="GO:0046765">
    <property type="term" value="P:viral budding from nuclear membrane"/>
    <property type="evidence" value="ECO:0000314"/>
    <property type="project" value="UniProtKB"/>
</dbReference>
<dbReference type="HAMAP" id="MF_04023">
    <property type="entry name" value="HSV_NEC1"/>
    <property type="match status" value="1"/>
</dbReference>
<dbReference type="InterPro" id="IPR021152">
    <property type="entry name" value="Herpes_UL31"/>
</dbReference>
<dbReference type="Pfam" id="PF02718">
    <property type="entry name" value="Herpes_UL31"/>
    <property type="match status" value="1"/>
</dbReference>
<comment type="function">
    <text evidence="1 5 6 12">Plays an essential role in virion nuclear egress, the first step of virion release from infected cell. Within the host nucleus, NEC1 interacts with the newly formed capsid through the vertexes and directs it to the inner nuclear membrane by associating with NEC2. Induces the budding of the capsid at the inner nuclear membrane as well as its envelopment into the perinuclear space. There, the NEC1/NEC2 complex promotes the fusion of the enveloped capsid with the outer nuclear membrane and the subsequent release of the viral capsid into the cytoplasm where it will reach the secondary budding sites in the host Golgi or trans-Golgi network.</text>
</comment>
<comment type="subunit">
    <text evidence="1 3 7 9 11 13">Forms a heterohexameric complex with NEC2. Interacts with capsid vertex specific component 2/CVC2; this interaction directs the capsid to the host inner nuclear membrane to initiate budding.</text>
</comment>
<comment type="interaction">
    <interactant intactId="EBI-7183650">
        <id>P10215</id>
    </interactant>
    <interactant intactId="EBI-351935">
        <id>P02545</id>
        <label>LMNA</label>
    </interactant>
    <organismsDiffer>true</organismsDiffer>
    <experiments>2</experiments>
</comment>
<comment type="subcellular location">
    <subcellularLocation>
        <location evidence="1 4 8">Host nucleus inner membrane</location>
    </subcellularLocation>
    <text evidence="1">Remains attached to the nucleus inner membrane through interaction with NEC2.</text>
</comment>
<comment type="PTM">
    <text evidence="1 10">Phosphorylated at serine residues in the N-terminus. This phosphorylation regulates the localization within the inner nuclear membrane.</text>
</comment>
<comment type="similarity">
    <text evidence="1">Belongs to the herpesviridae NEC1 protein family.</text>
</comment>
<feature type="chain" id="PRO_0000116006" description="Nuclear egress protein 1">
    <location>
        <begin position="1"/>
        <end position="306"/>
    </location>
</feature>
<feature type="zinc finger region" description="CCCH-type" evidence="1 13">
    <location>
        <begin position="106"/>
        <end position="225"/>
    </location>
</feature>
<feature type="region of interest" description="Disordered" evidence="2">
    <location>
        <begin position="1"/>
        <end position="49"/>
    </location>
</feature>
<feature type="helix" evidence="14">
    <location>
        <begin position="58"/>
        <end position="70"/>
    </location>
</feature>
<feature type="helix" evidence="14">
    <location>
        <begin position="72"/>
        <end position="81"/>
    </location>
</feature>
<feature type="strand" evidence="14">
    <location>
        <begin position="84"/>
        <end position="86"/>
    </location>
</feature>
<feature type="strand" evidence="14">
    <location>
        <begin position="89"/>
        <end position="91"/>
    </location>
</feature>
<feature type="strand" evidence="14">
    <location>
        <begin position="94"/>
        <end position="97"/>
    </location>
</feature>
<feature type="helix" evidence="14">
    <location>
        <begin position="98"/>
        <end position="100"/>
    </location>
</feature>
<feature type="strand" evidence="14">
    <location>
        <begin position="105"/>
        <end position="110"/>
    </location>
</feature>
<feature type="strand" evidence="14">
    <location>
        <begin position="113"/>
        <end position="118"/>
    </location>
</feature>
<feature type="turn" evidence="14">
    <location>
        <begin position="119"/>
        <end position="121"/>
    </location>
</feature>
<feature type="helix" evidence="14">
    <location>
        <begin position="123"/>
        <end position="128"/>
    </location>
</feature>
<feature type="helix" evidence="14">
    <location>
        <begin position="137"/>
        <end position="145"/>
    </location>
</feature>
<feature type="turn" evidence="14">
    <location>
        <begin position="146"/>
        <end position="150"/>
    </location>
</feature>
<feature type="helix" evidence="14">
    <location>
        <begin position="151"/>
        <end position="154"/>
    </location>
</feature>
<feature type="helix" evidence="14">
    <location>
        <begin position="155"/>
        <end position="167"/>
    </location>
</feature>
<feature type="helix" evidence="14">
    <location>
        <begin position="172"/>
        <end position="179"/>
    </location>
</feature>
<feature type="helix" evidence="14">
    <location>
        <begin position="183"/>
        <end position="193"/>
    </location>
</feature>
<feature type="turn" evidence="14">
    <location>
        <begin position="194"/>
        <end position="197"/>
    </location>
</feature>
<feature type="strand" evidence="14">
    <location>
        <begin position="201"/>
        <end position="206"/>
    </location>
</feature>
<feature type="turn" evidence="14">
    <location>
        <begin position="208"/>
        <end position="210"/>
    </location>
</feature>
<feature type="strand" evidence="14">
    <location>
        <begin position="211"/>
        <end position="218"/>
    </location>
</feature>
<feature type="strand" evidence="14">
    <location>
        <begin position="220"/>
        <end position="222"/>
    </location>
</feature>
<feature type="strand" evidence="14">
    <location>
        <begin position="224"/>
        <end position="226"/>
    </location>
</feature>
<feature type="helix" evidence="14">
    <location>
        <begin position="228"/>
        <end position="237"/>
    </location>
</feature>
<feature type="strand" evidence="14">
    <location>
        <begin position="241"/>
        <end position="248"/>
    </location>
</feature>
<feature type="strand" evidence="14">
    <location>
        <begin position="251"/>
        <end position="258"/>
    </location>
</feature>
<feature type="helix" evidence="14">
    <location>
        <begin position="273"/>
        <end position="282"/>
    </location>
</feature>
<feature type="helix" evidence="14">
    <location>
        <begin position="289"/>
        <end position="300"/>
    </location>
</feature>
<organism>
    <name type="scientific">Human herpesvirus 1 (strain 17)</name>
    <name type="common">HHV-1</name>
    <name type="synonym">Human herpes simplex virus 1</name>
    <dbReference type="NCBI Taxonomy" id="10299"/>
    <lineage>
        <taxon>Viruses</taxon>
        <taxon>Duplodnaviria</taxon>
        <taxon>Heunggongvirae</taxon>
        <taxon>Peploviricota</taxon>
        <taxon>Herviviricetes</taxon>
        <taxon>Herpesvirales</taxon>
        <taxon>Orthoherpesviridae</taxon>
        <taxon>Alphaherpesvirinae</taxon>
        <taxon>Simplexvirus</taxon>
        <taxon>Simplexvirus humanalpha1</taxon>
        <taxon>Human herpesvirus 1</taxon>
    </lineage>
</organism>
<gene>
    <name evidence="1" type="primary">NEC1</name>
    <name type="ordered locus">UL31</name>
</gene>
<reference key="1">
    <citation type="journal article" date="1988" name="J. Gen. Virol.">
        <title>The complete DNA sequence of the long unique region in the genome of herpes simplex virus type 1.</title>
        <authorList>
            <person name="McGeoch D.J."/>
            <person name="Dalrymple M.A."/>
            <person name="Davison A.J."/>
            <person name="Dolan A."/>
            <person name="Frame M.C."/>
            <person name="McNab D."/>
            <person name="Perry L.J."/>
            <person name="Scott J.E."/>
            <person name="Taylor P."/>
        </authorList>
    </citation>
    <scope>NUCLEOTIDE SEQUENCE [GENOMIC DNA]</scope>
</reference>
<reference key="2">
    <citation type="journal article" date="2001" name="J. Virol.">
        <title>U(L)31 and U(L)34 proteins of herpes simplex virus type 1 form a complex that accumulates at the nuclear rim and is required for envelopment of nucleocapsids.</title>
        <authorList>
            <person name="Reynolds A.E."/>
            <person name="Ryckman B.J."/>
            <person name="Baines J.D."/>
            <person name="Zhou Y."/>
            <person name="Liang L."/>
            <person name="Roller R.J."/>
        </authorList>
    </citation>
    <scope>INTERACTION WITH NEC2</scope>
</reference>
<reference key="3">
    <citation type="journal article" date="2002" name="J. Virol.">
        <title>Ultrastructural localization of the herpes simplex virus type 1 UL31, UL34, and US3 proteins suggests specific roles in primary envelopment and egress of nucleocapsids.</title>
        <authorList>
            <person name="Reynolds A.E."/>
            <person name="Wills E.G."/>
            <person name="Roller R.J."/>
            <person name="Ryckman B.J."/>
            <person name="Baines J.D."/>
        </authorList>
    </citation>
    <scope>SUBCELLULAR LOCATION</scope>
</reference>
<reference key="4">
    <citation type="journal article" date="2004" name="J. Virol.">
        <title>Conformational changes in the nuclear lamina induced by herpes simplex virus type 1 require genes U(L)31 and U(L)34.</title>
        <authorList>
            <person name="Reynolds A.E."/>
            <person name="Liang L."/>
            <person name="Baines J.D."/>
        </authorList>
    </citation>
    <scope>FUNCTION</scope>
</reference>
<reference key="5">
    <citation type="journal article" date="2004" name="J. Virol.">
        <title>Herpes simplex virus 1 U(L)31 and U(L)34 gene products promote the late maturation of viral replication compartments to the nuclear periphery.</title>
        <authorList>
            <person name="Simpson-Holley M."/>
            <person name="Baines J."/>
            <person name="Roller R."/>
            <person name="Knipe D.M."/>
        </authorList>
    </citation>
    <scope>FUNCTION</scope>
</reference>
<reference key="6">
    <citation type="journal article" date="2005" name="J. Virol.">
        <title>Identification of an essential domain in the herpes simplex virus 1 UL34 protein that is necessary and sufficient to interact with UL31 protein.</title>
        <authorList>
            <person name="Liang L."/>
            <person name="Baines J.D."/>
        </authorList>
    </citation>
    <scope>INTERACTION WITH NEC2</scope>
</reference>
<reference key="7">
    <citation type="journal article" date="2006" name="J. Virol.">
        <title>Common and specific properties of herpesvirus UL34/UL31 protein family members revealed by protein complementation assay.</title>
        <authorList>
            <person name="Schnee M."/>
            <person name="Ruzsics Z."/>
            <person name="Bubeck A."/>
            <person name="Koszinowski U.H."/>
        </authorList>
    </citation>
    <scope>INTERACTION WITH NEC2</scope>
</reference>
<reference key="8">
    <citation type="journal article" date="2006" name="J. Virol.">
        <title>Herpes simplex virus 1-encoded protein kinase UL13 phosphorylates viral Us3 protein kinase and regulates nuclear localization of viral envelopment factors UL34 and UL31.</title>
        <authorList>
            <person name="Kato A."/>
            <person name="Yamamoto M."/>
            <person name="Ohno T."/>
            <person name="Tanaka M."/>
            <person name="Sata T."/>
            <person name="Nishiyama Y."/>
            <person name="Kawaguchi Y."/>
        </authorList>
    </citation>
    <scope>SUBCELLULAR LOCATION</scope>
</reference>
<reference key="9">
    <citation type="journal article" date="2009" name="J. Virol.">
        <title>Phosphorylation of the UL31 protein of herpes simplex virus 1 by the US3-encoded kinase regulates localization of the nuclear envelopment complex and egress of nucleocapsids.</title>
        <authorList>
            <person name="Mou F."/>
            <person name="Wills E."/>
            <person name="Baines J.D."/>
        </authorList>
    </citation>
    <scope>PHOSPHORYLATION</scope>
</reference>
<reference key="10">
    <citation type="journal article" date="2009" name="J. Virol.">
        <title>The U(L)31 and U(L)34 gene products of herpes simplex virus 1 are required for optimal localization of viral glycoproteins D and M to the inner nuclear membranes of infected cells.</title>
        <authorList>
            <person name="Wills E."/>
            <person name="Mou F."/>
            <person name="Baines J.D."/>
        </authorList>
    </citation>
    <scope>INTERACTION WITH NEC2</scope>
</reference>
<reference key="11">
    <citation type="journal article" date="2014" name="J. Virol.">
        <title>Association of herpes simplex virus pUL31 with capsid vertices and components of the capsid vertex-specific complex.</title>
        <authorList>
            <person name="Yang K."/>
            <person name="Wills E."/>
            <person name="Lim H.Y."/>
            <person name="Zhou Z.H."/>
            <person name="Baines J.D."/>
        </authorList>
    </citation>
    <scope>FUNCTION</scope>
    <scope>INTERACTION WITH CVC2</scope>
</reference>
<reference key="12">
    <citation type="journal article" date="2015" name="EMBO J.">
        <title>Structural basis of membrane budding by the nuclear egress complex of herpesviruses.</title>
        <authorList>
            <person name="Bigalke J.M."/>
            <person name="Heldwein E.E."/>
        </authorList>
    </citation>
    <scope>X-RAY CRYSTALLOGRAPHY (2.77 ANGSTROMS) OF 51-306</scope>
    <scope>SUBUNIT</scope>
</reference>
<proteinExistence type="evidence at protein level"/>
<evidence type="ECO:0000255" key="1">
    <source>
        <dbReference type="HAMAP-Rule" id="MF_04023"/>
    </source>
</evidence>
<evidence type="ECO:0000256" key="2">
    <source>
        <dbReference type="SAM" id="MobiDB-lite"/>
    </source>
</evidence>
<evidence type="ECO:0000269" key="3">
    <source>
    </source>
</evidence>
<evidence type="ECO:0000269" key="4">
    <source>
    </source>
</evidence>
<evidence type="ECO:0000269" key="5">
    <source>
    </source>
</evidence>
<evidence type="ECO:0000269" key="6">
    <source>
    </source>
</evidence>
<evidence type="ECO:0000269" key="7">
    <source>
    </source>
</evidence>
<evidence type="ECO:0000269" key="8">
    <source>
    </source>
</evidence>
<evidence type="ECO:0000269" key="9">
    <source>
    </source>
</evidence>
<evidence type="ECO:0000269" key="10">
    <source>
    </source>
</evidence>
<evidence type="ECO:0000269" key="11">
    <source>
    </source>
</evidence>
<evidence type="ECO:0000269" key="12">
    <source>
    </source>
</evidence>
<evidence type="ECO:0000269" key="13">
    <source>
    </source>
</evidence>
<evidence type="ECO:0007829" key="14">
    <source>
        <dbReference type="PDB" id="4ZXS"/>
    </source>
</evidence>
<accession>P10215</accession>
<organismHost>
    <name type="scientific">Homo sapiens</name>
    <name type="common">Human</name>
    <dbReference type="NCBI Taxonomy" id="9606"/>
</organismHost>
<keyword id="KW-0002">3D-structure</keyword>
<keyword id="KW-1043">Host membrane</keyword>
<keyword id="KW-1048">Host nucleus</keyword>
<keyword id="KW-0472">Membrane</keyword>
<keyword id="KW-0479">Metal-binding</keyword>
<keyword id="KW-0597">Phosphoprotein</keyword>
<keyword id="KW-1185">Reference proteome</keyword>
<keyword id="KW-0862">Zinc</keyword>
<keyword id="KW-0863">Zinc-finger</keyword>